<keyword id="KW-0963">Cytoplasm</keyword>
<keyword id="KW-0324">Glycolysis</keyword>
<keyword id="KW-0456">Lyase</keyword>
<keyword id="KW-0460">Magnesium</keyword>
<keyword id="KW-0479">Metal-binding</keyword>
<keyword id="KW-0964">Secreted</keyword>
<evidence type="ECO:0000255" key="1">
    <source>
        <dbReference type="HAMAP-Rule" id="MF_00318"/>
    </source>
</evidence>
<name>ENO_NITV4</name>
<sequence length="437" mass="46883">MSTIVSVWAREILDSRGNPTIEVEVSLESGHSGRAAVPSGASTGTREALELRDGDKGRYKGKGVEKAVDNVMGEIAEAVIGLDALRQVQLDNTLLDLDGTDNKERLGANAMLGVSLATARAASSFLGLPLYQYLGGVNAKVLPVPLMNIINGGAHAPNNLDIQEFMIMPIGAATFRDALRMGAETFHTLKALLAADGHVTSVGDEGGFAPNLKSHDEAFKYITRAIEESGYIPGAEIALAIDAAASEFYRDGKYHLAGEGKTFSNSEMTEWLGEFTAKYPLISIEDGLAEGDWEGWGELTYKLGDTVQLVGDDIFVTNPDILAQGIDEGVANSILIKLNQIGTLTETLDTIEMAKQAAYTTVISHRSGETEDHFIADLAVGLNAGQIKTGSLCRSDRLAKYNQLLRIEEDLDDAGIYFGPMIASHFGYEGDEEFEDA</sequence>
<reference key="1">
    <citation type="journal article" date="2009" name="Environ. Microbiol.">
        <title>Contribution of mobile genetic elements to Desulfovibrio vulgaris genome plasticity.</title>
        <authorList>
            <person name="Walker C.B."/>
            <person name="Stolyar S."/>
            <person name="Chivian D."/>
            <person name="Pinel N."/>
            <person name="Gabster J.A."/>
            <person name="Dehal P.S."/>
            <person name="He Z."/>
            <person name="Yang Z.K."/>
            <person name="Yen H.C."/>
            <person name="Zhou J."/>
            <person name="Wall J.D."/>
            <person name="Hazen T.C."/>
            <person name="Arkin A.P."/>
            <person name="Stahl D.A."/>
        </authorList>
    </citation>
    <scope>NUCLEOTIDE SEQUENCE [LARGE SCALE GENOMIC DNA]</scope>
    <source>
        <strain>DP4</strain>
    </source>
</reference>
<accession>A1VGV5</accession>
<dbReference type="EC" id="4.2.1.11" evidence="1"/>
<dbReference type="EMBL" id="CP000527">
    <property type="protein sequence ID" value="ABM29671.1"/>
    <property type="molecule type" value="Genomic_DNA"/>
</dbReference>
<dbReference type="RefSeq" id="WP_010937629.1">
    <property type="nucleotide sequence ID" value="NC_008751.1"/>
</dbReference>
<dbReference type="SMR" id="A1VGV5"/>
<dbReference type="KEGG" id="dvl:Dvul_2659"/>
<dbReference type="HOGENOM" id="CLU_031223_2_1_7"/>
<dbReference type="UniPathway" id="UPA00109">
    <property type="reaction ID" value="UER00187"/>
</dbReference>
<dbReference type="Proteomes" id="UP000009173">
    <property type="component" value="Chromosome"/>
</dbReference>
<dbReference type="GO" id="GO:0009986">
    <property type="term" value="C:cell surface"/>
    <property type="evidence" value="ECO:0007669"/>
    <property type="project" value="UniProtKB-SubCell"/>
</dbReference>
<dbReference type="GO" id="GO:0005576">
    <property type="term" value="C:extracellular region"/>
    <property type="evidence" value="ECO:0007669"/>
    <property type="project" value="UniProtKB-SubCell"/>
</dbReference>
<dbReference type="GO" id="GO:0000015">
    <property type="term" value="C:phosphopyruvate hydratase complex"/>
    <property type="evidence" value="ECO:0007669"/>
    <property type="project" value="InterPro"/>
</dbReference>
<dbReference type="GO" id="GO:0000287">
    <property type="term" value="F:magnesium ion binding"/>
    <property type="evidence" value="ECO:0007669"/>
    <property type="project" value="UniProtKB-UniRule"/>
</dbReference>
<dbReference type="GO" id="GO:0004634">
    <property type="term" value="F:phosphopyruvate hydratase activity"/>
    <property type="evidence" value="ECO:0007669"/>
    <property type="project" value="UniProtKB-UniRule"/>
</dbReference>
<dbReference type="GO" id="GO:0006096">
    <property type="term" value="P:glycolytic process"/>
    <property type="evidence" value="ECO:0007669"/>
    <property type="project" value="UniProtKB-UniRule"/>
</dbReference>
<dbReference type="CDD" id="cd03313">
    <property type="entry name" value="enolase"/>
    <property type="match status" value="1"/>
</dbReference>
<dbReference type="FunFam" id="3.20.20.120:FF:000001">
    <property type="entry name" value="Enolase"/>
    <property type="match status" value="1"/>
</dbReference>
<dbReference type="FunFam" id="3.30.390.10:FF:000001">
    <property type="entry name" value="Enolase"/>
    <property type="match status" value="1"/>
</dbReference>
<dbReference type="Gene3D" id="3.20.20.120">
    <property type="entry name" value="Enolase-like C-terminal domain"/>
    <property type="match status" value="1"/>
</dbReference>
<dbReference type="Gene3D" id="3.30.390.10">
    <property type="entry name" value="Enolase-like, N-terminal domain"/>
    <property type="match status" value="1"/>
</dbReference>
<dbReference type="HAMAP" id="MF_00318">
    <property type="entry name" value="Enolase"/>
    <property type="match status" value="1"/>
</dbReference>
<dbReference type="InterPro" id="IPR000941">
    <property type="entry name" value="Enolase"/>
</dbReference>
<dbReference type="InterPro" id="IPR036849">
    <property type="entry name" value="Enolase-like_C_sf"/>
</dbReference>
<dbReference type="InterPro" id="IPR029017">
    <property type="entry name" value="Enolase-like_N"/>
</dbReference>
<dbReference type="InterPro" id="IPR020810">
    <property type="entry name" value="Enolase_C"/>
</dbReference>
<dbReference type="InterPro" id="IPR020809">
    <property type="entry name" value="Enolase_CS"/>
</dbReference>
<dbReference type="InterPro" id="IPR020811">
    <property type="entry name" value="Enolase_N"/>
</dbReference>
<dbReference type="NCBIfam" id="TIGR01060">
    <property type="entry name" value="eno"/>
    <property type="match status" value="1"/>
</dbReference>
<dbReference type="PANTHER" id="PTHR11902">
    <property type="entry name" value="ENOLASE"/>
    <property type="match status" value="1"/>
</dbReference>
<dbReference type="PANTHER" id="PTHR11902:SF1">
    <property type="entry name" value="ENOLASE"/>
    <property type="match status" value="1"/>
</dbReference>
<dbReference type="Pfam" id="PF00113">
    <property type="entry name" value="Enolase_C"/>
    <property type="match status" value="1"/>
</dbReference>
<dbReference type="Pfam" id="PF03952">
    <property type="entry name" value="Enolase_N"/>
    <property type="match status" value="1"/>
</dbReference>
<dbReference type="PIRSF" id="PIRSF001400">
    <property type="entry name" value="Enolase"/>
    <property type="match status" value="1"/>
</dbReference>
<dbReference type="PRINTS" id="PR00148">
    <property type="entry name" value="ENOLASE"/>
</dbReference>
<dbReference type="SFLD" id="SFLDF00002">
    <property type="entry name" value="enolase"/>
    <property type="match status" value="1"/>
</dbReference>
<dbReference type="SFLD" id="SFLDG00178">
    <property type="entry name" value="enolase"/>
    <property type="match status" value="1"/>
</dbReference>
<dbReference type="SMART" id="SM01192">
    <property type="entry name" value="Enolase_C"/>
    <property type="match status" value="1"/>
</dbReference>
<dbReference type="SMART" id="SM01193">
    <property type="entry name" value="Enolase_N"/>
    <property type="match status" value="1"/>
</dbReference>
<dbReference type="SUPFAM" id="SSF51604">
    <property type="entry name" value="Enolase C-terminal domain-like"/>
    <property type="match status" value="1"/>
</dbReference>
<dbReference type="SUPFAM" id="SSF54826">
    <property type="entry name" value="Enolase N-terminal domain-like"/>
    <property type="match status" value="1"/>
</dbReference>
<dbReference type="PROSITE" id="PS00164">
    <property type="entry name" value="ENOLASE"/>
    <property type="match status" value="1"/>
</dbReference>
<protein>
    <recommendedName>
        <fullName evidence="1">Enolase</fullName>
        <ecNumber evidence="1">4.2.1.11</ecNumber>
    </recommendedName>
    <alternativeName>
        <fullName evidence="1">2-phospho-D-glycerate hydro-lyase</fullName>
    </alternativeName>
    <alternativeName>
        <fullName evidence="1">2-phosphoglycerate dehydratase</fullName>
    </alternativeName>
</protein>
<comment type="function">
    <text evidence="1">Catalyzes the reversible conversion of 2-phosphoglycerate (2-PG) into phosphoenolpyruvate (PEP). It is essential for the degradation of carbohydrates via glycolysis.</text>
</comment>
<comment type="catalytic activity">
    <reaction evidence="1">
        <text>(2R)-2-phosphoglycerate = phosphoenolpyruvate + H2O</text>
        <dbReference type="Rhea" id="RHEA:10164"/>
        <dbReference type="ChEBI" id="CHEBI:15377"/>
        <dbReference type="ChEBI" id="CHEBI:58289"/>
        <dbReference type="ChEBI" id="CHEBI:58702"/>
        <dbReference type="EC" id="4.2.1.11"/>
    </reaction>
</comment>
<comment type="cofactor">
    <cofactor evidence="1">
        <name>Mg(2+)</name>
        <dbReference type="ChEBI" id="CHEBI:18420"/>
    </cofactor>
    <text evidence="1">Binds a second Mg(2+) ion via substrate during catalysis.</text>
</comment>
<comment type="pathway">
    <text evidence="1">Carbohydrate degradation; glycolysis; pyruvate from D-glyceraldehyde 3-phosphate: step 4/5.</text>
</comment>
<comment type="subcellular location">
    <subcellularLocation>
        <location evidence="1">Cytoplasm</location>
    </subcellularLocation>
    <subcellularLocation>
        <location evidence="1">Secreted</location>
    </subcellularLocation>
    <subcellularLocation>
        <location evidence="1">Cell surface</location>
    </subcellularLocation>
    <text evidence="1">Fractions of enolase are present in both the cytoplasm and on the cell surface.</text>
</comment>
<comment type="similarity">
    <text evidence="1">Belongs to the enolase family.</text>
</comment>
<organism>
    <name type="scientific">Nitratidesulfovibrio vulgaris (strain DP4)</name>
    <name type="common">Desulfovibrio vulgaris</name>
    <dbReference type="NCBI Taxonomy" id="391774"/>
    <lineage>
        <taxon>Bacteria</taxon>
        <taxon>Pseudomonadati</taxon>
        <taxon>Thermodesulfobacteriota</taxon>
        <taxon>Desulfovibrionia</taxon>
        <taxon>Desulfovibrionales</taxon>
        <taxon>Desulfovibrionaceae</taxon>
        <taxon>Nitratidesulfovibrio</taxon>
    </lineage>
</organism>
<feature type="chain" id="PRO_1000019206" description="Enolase">
    <location>
        <begin position="1"/>
        <end position="437"/>
    </location>
</feature>
<feature type="active site" description="Proton donor" evidence="1">
    <location>
        <position position="205"/>
    </location>
</feature>
<feature type="active site" description="Proton acceptor" evidence="1">
    <location>
        <position position="337"/>
    </location>
</feature>
<feature type="binding site" evidence="1">
    <location>
        <position position="163"/>
    </location>
    <ligand>
        <name>(2R)-2-phosphoglycerate</name>
        <dbReference type="ChEBI" id="CHEBI:58289"/>
    </ligand>
</feature>
<feature type="binding site" evidence="1">
    <location>
        <position position="242"/>
    </location>
    <ligand>
        <name>Mg(2+)</name>
        <dbReference type="ChEBI" id="CHEBI:18420"/>
    </ligand>
</feature>
<feature type="binding site" evidence="1">
    <location>
        <position position="285"/>
    </location>
    <ligand>
        <name>Mg(2+)</name>
        <dbReference type="ChEBI" id="CHEBI:18420"/>
    </ligand>
</feature>
<feature type="binding site" evidence="1">
    <location>
        <position position="312"/>
    </location>
    <ligand>
        <name>Mg(2+)</name>
        <dbReference type="ChEBI" id="CHEBI:18420"/>
    </ligand>
</feature>
<feature type="binding site" evidence="1">
    <location>
        <position position="337"/>
    </location>
    <ligand>
        <name>(2R)-2-phosphoglycerate</name>
        <dbReference type="ChEBI" id="CHEBI:58289"/>
    </ligand>
</feature>
<feature type="binding site" evidence="1">
    <location>
        <position position="366"/>
    </location>
    <ligand>
        <name>(2R)-2-phosphoglycerate</name>
        <dbReference type="ChEBI" id="CHEBI:58289"/>
    </ligand>
</feature>
<feature type="binding site" evidence="1">
    <location>
        <position position="367"/>
    </location>
    <ligand>
        <name>(2R)-2-phosphoglycerate</name>
        <dbReference type="ChEBI" id="CHEBI:58289"/>
    </ligand>
</feature>
<feature type="binding site" evidence="1">
    <location>
        <position position="388"/>
    </location>
    <ligand>
        <name>(2R)-2-phosphoglycerate</name>
        <dbReference type="ChEBI" id="CHEBI:58289"/>
    </ligand>
</feature>
<proteinExistence type="inferred from homology"/>
<gene>
    <name evidence="1" type="primary">eno</name>
    <name type="ordered locus">Dvul_2659</name>
</gene>